<feature type="chain" id="PRO_1000141998" description="Large ribosomal subunit protein uL24">
    <location>
        <begin position="1"/>
        <end position="104"/>
    </location>
</feature>
<protein>
    <recommendedName>
        <fullName evidence="1">Large ribosomal subunit protein uL24</fullName>
    </recommendedName>
    <alternativeName>
        <fullName evidence="2">50S ribosomal protein L24</fullName>
    </alternativeName>
</protein>
<sequence length="104" mass="11316">MAAKIRRDDEVIVLTGKDKGKRGKVKNVLSSGKVIVEGINLVKKHQKPVPALNQPGGIVEKEAAIQVSNVAIFNAATGKADRVGFRFEDGKKVRFFKSNSETIK</sequence>
<evidence type="ECO:0000255" key="1">
    <source>
        <dbReference type="HAMAP-Rule" id="MF_01326"/>
    </source>
</evidence>
<evidence type="ECO:0000305" key="2"/>
<reference key="1">
    <citation type="journal article" date="2009" name="PLoS Genet.">
        <title>Organised genome dynamics in the Escherichia coli species results in highly diverse adaptive paths.</title>
        <authorList>
            <person name="Touchon M."/>
            <person name="Hoede C."/>
            <person name="Tenaillon O."/>
            <person name="Barbe V."/>
            <person name="Baeriswyl S."/>
            <person name="Bidet P."/>
            <person name="Bingen E."/>
            <person name="Bonacorsi S."/>
            <person name="Bouchier C."/>
            <person name="Bouvet O."/>
            <person name="Calteau A."/>
            <person name="Chiapello H."/>
            <person name="Clermont O."/>
            <person name="Cruveiller S."/>
            <person name="Danchin A."/>
            <person name="Diard M."/>
            <person name="Dossat C."/>
            <person name="Karoui M.E."/>
            <person name="Frapy E."/>
            <person name="Garry L."/>
            <person name="Ghigo J.M."/>
            <person name="Gilles A.M."/>
            <person name="Johnson J."/>
            <person name="Le Bouguenec C."/>
            <person name="Lescat M."/>
            <person name="Mangenot S."/>
            <person name="Martinez-Jehanne V."/>
            <person name="Matic I."/>
            <person name="Nassif X."/>
            <person name="Oztas S."/>
            <person name="Petit M.A."/>
            <person name="Pichon C."/>
            <person name="Rouy Z."/>
            <person name="Ruf C.S."/>
            <person name="Schneider D."/>
            <person name="Tourret J."/>
            <person name="Vacherie B."/>
            <person name="Vallenet D."/>
            <person name="Medigue C."/>
            <person name="Rocha E.P.C."/>
            <person name="Denamur E."/>
        </authorList>
    </citation>
    <scope>NUCLEOTIDE SEQUENCE [LARGE SCALE GENOMIC DNA]</scope>
    <source>
        <strain>ATCC 35469 / DSM 13698 / BCRC 15582 / CCUG 18766 / IAM 14443 / JCM 21226 / LMG 7866 / NBRC 102419 / NCTC 12128 / CDC 0568-73</strain>
    </source>
</reference>
<gene>
    <name evidence="1" type="primary">rplX</name>
    <name type="ordered locus">EFER_3292</name>
</gene>
<accession>B7LRS5</accession>
<dbReference type="EMBL" id="CU928158">
    <property type="protein sequence ID" value="CAQ90772.1"/>
    <property type="molecule type" value="Genomic_DNA"/>
</dbReference>
<dbReference type="RefSeq" id="WP_000729185.1">
    <property type="nucleotide sequence ID" value="NC_011740.1"/>
</dbReference>
<dbReference type="SMR" id="B7LRS5"/>
<dbReference type="GeneID" id="93778678"/>
<dbReference type="KEGG" id="efe:EFER_3292"/>
<dbReference type="HOGENOM" id="CLU_093315_2_2_6"/>
<dbReference type="OrthoDB" id="9807419at2"/>
<dbReference type="Proteomes" id="UP000000745">
    <property type="component" value="Chromosome"/>
</dbReference>
<dbReference type="GO" id="GO:0005829">
    <property type="term" value="C:cytosol"/>
    <property type="evidence" value="ECO:0007669"/>
    <property type="project" value="UniProtKB-ARBA"/>
</dbReference>
<dbReference type="GO" id="GO:1990904">
    <property type="term" value="C:ribonucleoprotein complex"/>
    <property type="evidence" value="ECO:0007669"/>
    <property type="project" value="UniProtKB-KW"/>
</dbReference>
<dbReference type="GO" id="GO:0005840">
    <property type="term" value="C:ribosome"/>
    <property type="evidence" value="ECO:0007669"/>
    <property type="project" value="UniProtKB-KW"/>
</dbReference>
<dbReference type="GO" id="GO:0019843">
    <property type="term" value="F:rRNA binding"/>
    <property type="evidence" value="ECO:0007669"/>
    <property type="project" value="UniProtKB-UniRule"/>
</dbReference>
<dbReference type="GO" id="GO:0003735">
    <property type="term" value="F:structural constituent of ribosome"/>
    <property type="evidence" value="ECO:0007669"/>
    <property type="project" value="InterPro"/>
</dbReference>
<dbReference type="GO" id="GO:0006412">
    <property type="term" value="P:translation"/>
    <property type="evidence" value="ECO:0007669"/>
    <property type="project" value="UniProtKB-UniRule"/>
</dbReference>
<dbReference type="CDD" id="cd06089">
    <property type="entry name" value="KOW_RPL26"/>
    <property type="match status" value="1"/>
</dbReference>
<dbReference type="FunFam" id="2.30.30.30:FF:000004">
    <property type="entry name" value="50S ribosomal protein L24"/>
    <property type="match status" value="1"/>
</dbReference>
<dbReference type="Gene3D" id="2.30.30.30">
    <property type="match status" value="1"/>
</dbReference>
<dbReference type="HAMAP" id="MF_01326_B">
    <property type="entry name" value="Ribosomal_uL24_B"/>
    <property type="match status" value="1"/>
</dbReference>
<dbReference type="InterPro" id="IPR005824">
    <property type="entry name" value="KOW"/>
</dbReference>
<dbReference type="InterPro" id="IPR014722">
    <property type="entry name" value="Rib_uL2_dom2"/>
</dbReference>
<dbReference type="InterPro" id="IPR003256">
    <property type="entry name" value="Ribosomal_uL24"/>
</dbReference>
<dbReference type="InterPro" id="IPR005825">
    <property type="entry name" value="Ribosomal_uL24_CS"/>
</dbReference>
<dbReference type="InterPro" id="IPR041988">
    <property type="entry name" value="Ribosomal_uL24_KOW"/>
</dbReference>
<dbReference type="InterPro" id="IPR008991">
    <property type="entry name" value="Translation_prot_SH3-like_sf"/>
</dbReference>
<dbReference type="NCBIfam" id="TIGR01079">
    <property type="entry name" value="rplX_bact"/>
    <property type="match status" value="1"/>
</dbReference>
<dbReference type="PANTHER" id="PTHR12903">
    <property type="entry name" value="MITOCHONDRIAL RIBOSOMAL PROTEIN L24"/>
    <property type="match status" value="1"/>
</dbReference>
<dbReference type="Pfam" id="PF00467">
    <property type="entry name" value="KOW"/>
    <property type="match status" value="1"/>
</dbReference>
<dbReference type="Pfam" id="PF17136">
    <property type="entry name" value="ribosomal_L24"/>
    <property type="match status" value="1"/>
</dbReference>
<dbReference type="SMART" id="SM00739">
    <property type="entry name" value="KOW"/>
    <property type="match status" value="1"/>
</dbReference>
<dbReference type="SUPFAM" id="SSF50104">
    <property type="entry name" value="Translation proteins SH3-like domain"/>
    <property type="match status" value="1"/>
</dbReference>
<dbReference type="PROSITE" id="PS01108">
    <property type="entry name" value="RIBOSOMAL_L24"/>
    <property type="match status" value="1"/>
</dbReference>
<comment type="function">
    <text evidence="1">One of two assembly initiator proteins, it binds directly to the 5'-end of the 23S rRNA, where it nucleates assembly of the 50S subunit.</text>
</comment>
<comment type="function">
    <text evidence="1">One of the proteins that surrounds the polypeptide exit tunnel on the outside of the subunit.</text>
</comment>
<comment type="subunit">
    <text evidence="1">Part of the 50S ribosomal subunit.</text>
</comment>
<comment type="similarity">
    <text evidence="1">Belongs to the universal ribosomal protein uL24 family.</text>
</comment>
<name>RL24_ESCF3</name>
<organism>
    <name type="scientific">Escherichia fergusonii (strain ATCC 35469 / DSM 13698 / CCUG 18766 / IAM 14443 / JCM 21226 / LMG 7866 / NBRC 102419 / NCTC 12128 / CDC 0568-73)</name>
    <dbReference type="NCBI Taxonomy" id="585054"/>
    <lineage>
        <taxon>Bacteria</taxon>
        <taxon>Pseudomonadati</taxon>
        <taxon>Pseudomonadota</taxon>
        <taxon>Gammaproteobacteria</taxon>
        <taxon>Enterobacterales</taxon>
        <taxon>Enterobacteriaceae</taxon>
        <taxon>Escherichia</taxon>
    </lineage>
</organism>
<keyword id="KW-0687">Ribonucleoprotein</keyword>
<keyword id="KW-0689">Ribosomal protein</keyword>
<keyword id="KW-0694">RNA-binding</keyword>
<keyword id="KW-0699">rRNA-binding</keyword>
<proteinExistence type="inferred from homology"/>